<proteinExistence type="evidence at transcript level"/>
<reference key="1">
    <citation type="submission" date="2004-10" db="EMBL/GenBank/DDBJ databases">
        <authorList>
            <consortium name="NIH - Xenopus Gene Collection (XGC) project"/>
        </authorList>
    </citation>
    <scope>NUCLEOTIDE SEQUENCE [LARGE SCALE MRNA]</scope>
    <source>
        <tissue>Kidney</tissue>
    </source>
</reference>
<organism>
    <name type="scientific">Xenopus laevis</name>
    <name type="common">African clawed frog</name>
    <dbReference type="NCBI Taxonomy" id="8355"/>
    <lineage>
        <taxon>Eukaryota</taxon>
        <taxon>Metazoa</taxon>
        <taxon>Chordata</taxon>
        <taxon>Craniata</taxon>
        <taxon>Vertebrata</taxon>
        <taxon>Euteleostomi</taxon>
        <taxon>Amphibia</taxon>
        <taxon>Batrachia</taxon>
        <taxon>Anura</taxon>
        <taxon>Pipoidea</taxon>
        <taxon>Pipidae</taxon>
        <taxon>Xenopodinae</taxon>
        <taxon>Xenopus</taxon>
        <taxon>Xenopus</taxon>
    </lineage>
</organism>
<protein>
    <recommendedName>
        <fullName>Threonine synthase-like 2</fullName>
        <shortName>TSH2</shortName>
        <ecNumber>4.2.3.-</ecNumber>
    </recommendedName>
</protein>
<gene>
    <name type="primary">thnsl2</name>
</gene>
<dbReference type="EC" id="4.2.3.-"/>
<dbReference type="EMBL" id="BC084269">
    <property type="protein sequence ID" value="AAH84269.1"/>
    <property type="molecule type" value="mRNA"/>
</dbReference>
<dbReference type="RefSeq" id="NP_001088267.1">
    <property type="nucleotide sequence ID" value="NM_001094798.1"/>
</dbReference>
<dbReference type="SMR" id="Q5XH07"/>
<dbReference type="DNASU" id="495098"/>
<dbReference type="GeneID" id="495098"/>
<dbReference type="KEGG" id="xla:495098"/>
<dbReference type="AGR" id="Xenbase:XB-GENE-5918635"/>
<dbReference type="CTD" id="495098"/>
<dbReference type="Xenbase" id="XB-GENE-5918635">
    <property type="gene designation" value="thnsl2.L"/>
</dbReference>
<dbReference type="OrthoDB" id="5203861at2759"/>
<dbReference type="Proteomes" id="UP000186698">
    <property type="component" value="Chromosome 1L"/>
</dbReference>
<dbReference type="Bgee" id="495098">
    <property type="expression patterns" value="Expressed in kidney and 19 other cell types or tissues"/>
</dbReference>
<dbReference type="GO" id="GO:0016829">
    <property type="term" value="F:lyase activity"/>
    <property type="evidence" value="ECO:0007669"/>
    <property type="project" value="UniProtKB-KW"/>
</dbReference>
<dbReference type="GO" id="GO:0030170">
    <property type="term" value="F:pyridoxal phosphate binding"/>
    <property type="evidence" value="ECO:0000318"/>
    <property type="project" value="GO_Central"/>
</dbReference>
<dbReference type="GO" id="GO:0046360">
    <property type="term" value="P:2-oxobutyrate biosynthetic process"/>
    <property type="evidence" value="ECO:0000318"/>
    <property type="project" value="GO_Central"/>
</dbReference>
<dbReference type="GO" id="GO:0009071">
    <property type="term" value="P:serine family amino acid catabolic process"/>
    <property type="evidence" value="ECO:0000318"/>
    <property type="project" value="GO_Central"/>
</dbReference>
<dbReference type="CDD" id="cd01560">
    <property type="entry name" value="Thr-synth_2"/>
    <property type="match status" value="1"/>
</dbReference>
<dbReference type="FunFam" id="3.90.1380.10:FF:000003">
    <property type="entry name" value="THR4p Threonine synthase"/>
    <property type="match status" value="1"/>
</dbReference>
<dbReference type="FunFam" id="3.40.50.1100:FF:000047">
    <property type="entry name" value="Threonine synthase like 2"/>
    <property type="match status" value="1"/>
</dbReference>
<dbReference type="Gene3D" id="3.40.50.1100">
    <property type="match status" value="2"/>
</dbReference>
<dbReference type="Gene3D" id="3.90.1380.10">
    <property type="entry name" value="Threonine synthase, N-terminal domain"/>
    <property type="match status" value="1"/>
</dbReference>
<dbReference type="InterPro" id="IPR029144">
    <property type="entry name" value="Thr_synth_N"/>
</dbReference>
<dbReference type="InterPro" id="IPR037158">
    <property type="entry name" value="Thr_synth_N_sf"/>
</dbReference>
<dbReference type="InterPro" id="IPR004450">
    <property type="entry name" value="Thr_synthase-like"/>
</dbReference>
<dbReference type="InterPro" id="IPR051166">
    <property type="entry name" value="Threonine_Synthase"/>
</dbReference>
<dbReference type="InterPro" id="IPR001926">
    <property type="entry name" value="TrpB-like_PALP"/>
</dbReference>
<dbReference type="InterPro" id="IPR036052">
    <property type="entry name" value="TrpB-like_PALP_sf"/>
</dbReference>
<dbReference type="NCBIfam" id="TIGR00260">
    <property type="entry name" value="thrC"/>
    <property type="match status" value="1"/>
</dbReference>
<dbReference type="PANTHER" id="PTHR42690">
    <property type="entry name" value="THREONINE SYNTHASE FAMILY MEMBER"/>
    <property type="match status" value="1"/>
</dbReference>
<dbReference type="PANTHER" id="PTHR42690:SF1">
    <property type="entry name" value="THREONINE SYNTHASE-LIKE 2"/>
    <property type="match status" value="1"/>
</dbReference>
<dbReference type="Pfam" id="PF00291">
    <property type="entry name" value="PALP"/>
    <property type="match status" value="1"/>
</dbReference>
<dbReference type="Pfam" id="PF14821">
    <property type="entry name" value="Thr_synth_N"/>
    <property type="match status" value="1"/>
</dbReference>
<dbReference type="SUPFAM" id="SSF53686">
    <property type="entry name" value="Tryptophan synthase beta subunit-like PLP-dependent enzymes"/>
    <property type="match status" value="1"/>
</dbReference>
<dbReference type="PROSITE" id="PS00165">
    <property type="entry name" value="DEHYDRATASE_SER_THR"/>
    <property type="match status" value="1"/>
</dbReference>
<feature type="chain" id="PRO_0000306411" description="Threonine synthase-like 2">
    <location>
        <begin position="1"/>
        <end position="472"/>
    </location>
</feature>
<feature type="modified residue" description="N6-(pyridoxal phosphate)lysine" evidence="1">
    <location>
        <position position="113"/>
    </location>
</feature>
<evidence type="ECO:0000250" key="1"/>
<evidence type="ECO:0000305" key="2"/>
<accession>Q5XH07</accession>
<comment type="function">
    <text evidence="1">Acts as a catabolic phospho-lyase on both gamma- and beta-phosphorylated substrates. Degrades O-phospho-threonine (PThr) to alpha-ketobutyrate, ammonia and phosphate (By similarity).</text>
</comment>
<comment type="cofactor">
    <cofactor evidence="1">
        <name>pyridoxal 5'-phosphate</name>
        <dbReference type="ChEBI" id="CHEBI:597326"/>
    </cofactor>
</comment>
<comment type="similarity">
    <text evidence="2">Belongs to the threonine synthase family.</text>
</comment>
<sequence>MKYTSTRGGLIGVDFEGVLFSGFAPDGGLFMPEDIPKVDKRTLQTWSSYSYIQLVKEICSLFISPESIPRADLEGLIDRAFIRFRHRDIVPITRLKSGLNVMEMWHGVTHAFKDLAMSCVGELLDYFLKRKNKHVTILVATSGDTGSSAIESVRRRENMDIIVLLPHGRCTKIQELQMTTVIEDNVHVFSVDGTSDELDYPIKRLFADSDFVKKHNIMSTNSVNWARILVQIAHFFYGYMQCAPLTELTPVEIIVPTGGAGNITAGCIAQAMGLPIHLVAVVNRNDIVHRTVQYGDFSLGDTKATLASAMDIQEPYNMERILWLLAGSEKSHIKEMMKEFQEKKRVKLPEQLHKKIAGAMTSCVVTDENILGTIGRCWEENHYLLCPHSAVAVYYHYQQMDSNDKSPRCCLAPASAAKFQDVIIKANLTPDIPQEIKDLEKKKTRSHHLTKEDDWEKVLRQTIESISQRKVQ</sequence>
<keyword id="KW-0456">Lyase</keyword>
<keyword id="KW-0663">Pyridoxal phosphate</keyword>
<keyword id="KW-1185">Reference proteome</keyword>
<name>THNS2_XENLA</name>